<organism>
    <name type="scientific">Shigella sonnei (strain Ss046)</name>
    <dbReference type="NCBI Taxonomy" id="300269"/>
    <lineage>
        <taxon>Bacteria</taxon>
        <taxon>Pseudomonadati</taxon>
        <taxon>Pseudomonadota</taxon>
        <taxon>Gammaproteobacteria</taxon>
        <taxon>Enterobacterales</taxon>
        <taxon>Enterobacteriaceae</taxon>
        <taxon>Shigella</taxon>
    </lineage>
</organism>
<evidence type="ECO:0000255" key="1">
    <source>
        <dbReference type="HAMAP-Rule" id="MF_01064"/>
    </source>
</evidence>
<proteinExistence type="inferred from homology"/>
<sequence>MEKYCELIRKRYAEIASGDLGYVPDALGCVLKVLNEMAADDALSEAVREKAAYAAANLLVSDYVNE</sequence>
<reference key="1">
    <citation type="journal article" date="2005" name="Nucleic Acids Res.">
        <title>Genome dynamics and diversity of Shigella species, the etiologic agents of bacillary dysentery.</title>
        <authorList>
            <person name="Yang F."/>
            <person name="Yang J."/>
            <person name="Zhang X."/>
            <person name="Chen L."/>
            <person name="Jiang Y."/>
            <person name="Yan Y."/>
            <person name="Tang X."/>
            <person name="Wang J."/>
            <person name="Xiong Z."/>
            <person name="Dong J."/>
            <person name="Xue Y."/>
            <person name="Zhu Y."/>
            <person name="Xu X."/>
            <person name="Sun L."/>
            <person name="Chen S."/>
            <person name="Nie H."/>
            <person name="Peng J."/>
            <person name="Xu J."/>
            <person name="Wang Y."/>
            <person name="Yuan Z."/>
            <person name="Wen Y."/>
            <person name="Yao Z."/>
            <person name="Shen Y."/>
            <person name="Qiang B."/>
            <person name="Hou Y."/>
            <person name="Yu J."/>
            <person name="Jin Q."/>
        </authorList>
    </citation>
    <scope>NUCLEOTIDE SEQUENCE [LARGE SCALE GENOMIC DNA]</scope>
    <source>
        <strain>Ss046</strain>
    </source>
</reference>
<dbReference type="EMBL" id="CP000038">
    <property type="protein sequence ID" value="AAZ86995.1"/>
    <property type="molecule type" value="Genomic_DNA"/>
</dbReference>
<dbReference type="RefSeq" id="WP_000417058.1">
    <property type="nucleotide sequence ID" value="NC_007384.1"/>
</dbReference>
<dbReference type="SMR" id="Q3Z5G7"/>
<dbReference type="KEGG" id="ssn:SSON_0203"/>
<dbReference type="HOGENOM" id="CLU_190008_0_0_6"/>
<dbReference type="Proteomes" id="UP000002529">
    <property type="component" value="Chromosome"/>
</dbReference>
<dbReference type="HAMAP" id="MF_01064">
    <property type="entry name" value="UPF0253"/>
    <property type="match status" value="1"/>
</dbReference>
<dbReference type="InterPro" id="IPR009624">
    <property type="entry name" value="UPF0253"/>
</dbReference>
<dbReference type="NCBIfam" id="NF003436">
    <property type="entry name" value="PRK04964.1"/>
    <property type="match status" value="1"/>
</dbReference>
<dbReference type="Pfam" id="PF06786">
    <property type="entry name" value="UPF0253"/>
    <property type="match status" value="1"/>
</dbReference>
<keyword id="KW-1185">Reference proteome</keyword>
<protein>
    <recommendedName>
        <fullName evidence="1">UPF0253 protein YaeP</fullName>
    </recommendedName>
</protein>
<gene>
    <name evidence="1" type="primary">yaeP</name>
    <name type="ordered locus">SSON_0203</name>
</gene>
<accession>Q3Z5G7</accession>
<feature type="chain" id="PRO_0000277526" description="UPF0253 protein YaeP">
    <location>
        <begin position="1"/>
        <end position="66"/>
    </location>
</feature>
<comment type="similarity">
    <text evidence="1">Belongs to the UPF0253 family.</text>
</comment>
<name>YAEP_SHISS</name>